<organism>
    <name type="scientific">Talaromyces islandicus</name>
    <name type="common">Penicillium islandicum</name>
    <dbReference type="NCBI Taxonomy" id="28573"/>
    <lineage>
        <taxon>Eukaryota</taxon>
        <taxon>Fungi</taxon>
        <taxon>Dikarya</taxon>
        <taxon>Ascomycota</taxon>
        <taxon>Pezizomycotina</taxon>
        <taxon>Eurotiomycetes</taxon>
        <taxon>Eurotiomycetidae</taxon>
        <taxon>Eurotiales</taxon>
        <taxon>Trichocomaceae</taxon>
        <taxon>Talaromyces</taxon>
        <taxon>Talaromyces sect. Islandici</taxon>
    </lineage>
</organism>
<name>CCTT_TALIS</name>
<proteinExistence type="inferred from homology"/>
<dbReference type="EC" id="1.1.1.-" evidence="10"/>
<dbReference type="EMBL" id="CVMT01000002">
    <property type="protein sequence ID" value="CRG85579.1"/>
    <property type="molecule type" value="Genomic_DNA"/>
</dbReference>
<dbReference type="SMR" id="A0A0U1LQE2"/>
<dbReference type="STRING" id="28573.A0A0U1LQE2"/>
<dbReference type="GlyCosmos" id="A0A0U1LQE2">
    <property type="glycosylation" value="1 site, No reported glycans"/>
</dbReference>
<dbReference type="OMA" id="FTWMINR"/>
<dbReference type="OrthoDB" id="2102561at2759"/>
<dbReference type="Proteomes" id="UP000054383">
    <property type="component" value="Unassembled WGS sequence"/>
</dbReference>
<dbReference type="GO" id="GO:0005783">
    <property type="term" value="C:endoplasmic reticulum"/>
    <property type="evidence" value="ECO:0007669"/>
    <property type="project" value="TreeGrafter"/>
</dbReference>
<dbReference type="GO" id="GO:0005811">
    <property type="term" value="C:lipid droplet"/>
    <property type="evidence" value="ECO:0007669"/>
    <property type="project" value="TreeGrafter"/>
</dbReference>
<dbReference type="GO" id="GO:0000140">
    <property type="term" value="F:acylglycerone-phosphate reductase (NADP+) activity"/>
    <property type="evidence" value="ECO:0007669"/>
    <property type="project" value="TreeGrafter"/>
</dbReference>
<dbReference type="GO" id="GO:0004806">
    <property type="term" value="F:triacylglycerol lipase activity"/>
    <property type="evidence" value="ECO:0007669"/>
    <property type="project" value="TreeGrafter"/>
</dbReference>
<dbReference type="GO" id="GO:0006654">
    <property type="term" value="P:phosphatidic acid biosynthetic process"/>
    <property type="evidence" value="ECO:0007669"/>
    <property type="project" value="TreeGrafter"/>
</dbReference>
<dbReference type="GO" id="GO:0019433">
    <property type="term" value="P:triglyceride catabolic process"/>
    <property type="evidence" value="ECO:0007669"/>
    <property type="project" value="TreeGrafter"/>
</dbReference>
<dbReference type="Gene3D" id="3.40.50.720">
    <property type="entry name" value="NAD(P)-binding Rossmann-like Domain"/>
    <property type="match status" value="1"/>
</dbReference>
<dbReference type="InterPro" id="IPR036291">
    <property type="entry name" value="NAD(P)-bd_dom_sf"/>
</dbReference>
<dbReference type="InterPro" id="IPR002347">
    <property type="entry name" value="SDR_fam"/>
</dbReference>
<dbReference type="PANTHER" id="PTHR44169">
    <property type="entry name" value="NADPH-DEPENDENT 1-ACYLDIHYDROXYACETONE PHOSPHATE REDUCTASE"/>
    <property type="match status" value="1"/>
</dbReference>
<dbReference type="PANTHER" id="PTHR44169:SF6">
    <property type="entry name" value="NADPH-DEPENDENT 1-ACYLDIHYDROXYACETONE PHOSPHATE REDUCTASE"/>
    <property type="match status" value="1"/>
</dbReference>
<dbReference type="Pfam" id="PF00106">
    <property type="entry name" value="adh_short"/>
    <property type="match status" value="1"/>
</dbReference>
<dbReference type="PRINTS" id="PR00081">
    <property type="entry name" value="GDHRDH"/>
</dbReference>
<dbReference type="PRINTS" id="PR00080">
    <property type="entry name" value="SDRFAMILY"/>
</dbReference>
<dbReference type="SMART" id="SM00822">
    <property type="entry name" value="PKS_KR"/>
    <property type="match status" value="1"/>
</dbReference>
<dbReference type="SUPFAM" id="SSF51735">
    <property type="entry name" value="NAD(P)-binding Rossmann-fold domains"/>
    <property type="match status" value="1"/>
</dbReference>
<protein>
    <recommendedName>
        <fullName evidence="8">Short-chain dehydrogenase cctT</fullName>
        <ecNumber evidence="10">1.1.1.-</ecNumber>
    </recommendedName>
    <alternativeName>
        <fullName evidence="8">Cyclochlorotine biosynthesis protein T</fullName>
    </alternativeName>
</protein>
<evidence type="ECO:0000250" key="1">
    <source>
        <dbReference type="UniProtKB" id="L0E2Z4"/>
    </source>
</evidence>
<evidence type="ECO:0000250" key="2">
    <source>
        <dbReference type="UniProtKB" id="O93868"/>
    </source>
</evidence>
<evidence type="ECO:0000255" key="3"/>
<evidence type="ECO:0000255" key="4">
    <source>
        <dbReference type="PROSITE-ProRule" id="PRU00498"/>
    </source>
</evidence>
<evidence type="ECO:0000255" key="5">
    <source>
        <dbReference type="PROSITE-ProRule" id="PRU10001"/>
    </source>
</evidence>
<evidence type="ECO:0000269" key="6">
    <source>
    </source>
</evidence>
<evidence type="ECO:0000269" key="7">
    <source>
    </source>
</evidence>
<evidence type="ECO:0000303" key="8">
    <source>
    </source>
</evidence>
<evidence type="ECO:0000305" key="9"/>
<evidence type="ECO:0000305" key="10">
    <source>
    </source>
</evidence>
<evidence type="ECO:0000305" key="11">
    <source>
    </source>
</evidence>
<gene>
    <name evidence="8" type="primary">cctT</name>
    <name type="ORF">PISL3812_02625</name>
</gene>
<feature type="signal peptide" evidence="3">
    <location>
        <begin position="1"/>
        <end position="20"/>
    </location>
</feature>
<feature type="chain" id="PRO_0000438673" description="Short-chain dehydrogenase cctT">
    <location>
        <begin position="21"/>
        <end position="283"/>
    </location>
</feature>
<feature type="active site" description="Proton donor" evidence="2">
    <location>
        <position position="133"/>
    </location>
</feature>
<feature type="active site" description="Proton acceptor" evidence="5">
    <location>
        <position position="147"/>
    </location>
</feature>
<feature type="binding site" evidence="1">
    <location>
        <position position="7"/>
    </location>
    <ligand>
        <name>NADP(+)</name>
        <dbReference type="ChEBI" id="CHEBI:58349"/>
    </ligand>
</feature>
<feature type="binding site" evidence="1">
    <location>
        <position position="33"/>
    </location>
    <ligand>
        <name>NADP(+)</name>
        <dbReference type="ChEBI" id="CHEBI:58349"/>
    </ligand>
</feature>
<feature type="binding site" evidence="1">
    <location>
        <position position="39"/>
    </location>
    <ligand>
        <name>NADP(+)</name>
        <dbReference type="ChEBI" id="CHEBI:58349"/>
    </ligand>
</feature>
<feature type="binding site" evidence="1">
    <location>
        <position position="55"/>
    </location>
    <ligand>
        <name>NADP(+)</name>
        <dbReference type="ChEBI" id="CHEBI:58349"/>
    </ligand>
</feature>
<feature type="binding site" evidence="2">
    <location>
        <position position="83"/>
    </location>
    <ligand>
        <name>NADP(+)</name>
        <dbReference type="ChEBI" id="CHEBI:58349"/>
    </ligand>
</feature>
<feature type="binding site" evidence="2">
    <location>
        <position position="147"/>
    </location>
    <ligand>
        <name>NADP(+)</name>
        <dbReference type="ChEBI" id="CHEBI:58349"/>
    </ligand>
</feature>
<feature type="binding site" evidence="2">
    <location>
        <position position="151"/>
    </location>
    <ligand>
        <name>NADP(+)</name>
        <dbReference type="ChEBI" id="CHEBI:58349"/>
    </ligand>
</feature>
<feature type="binding site" evidence="2">
    <location>
        <position position="180"/>
    </location>
    <ligand>
        <name>NADP(+)</name>
        <dbReference type="ChEBI" id="CHEBI:58349"/>
    </ligand>
</feature>
<feature type="binding site" evidence="1">
    <location>
        <position position="182"/>
    </location>
    <ligand>
        <name>NADP(+)</name>
        <dbReference type="ChEBI" id="CHEBI:58349"/>
    </ligand>
</feature>
<feature type="glycosylation site" description="N-linked (GlcNAc...) asparagine" evidence="4">
    <location>
        <position position="131"/>
    </location>
</feature>
<keyword id="KW-0325">Glycoprotein</keyword>
<keyword id="KW-0521">NADP</keyword>
<keyword id="KW-0560">Oxidoreductase</keyword>
<keyword id="KW-1185">Reference proteome</keyword>
<keyword id="KW-0732">Signal</keyword>
<sequence>MLKTVLITGCSHGGLGAAMAKIYHAKGFQVFATVRNKAKVGSLGGIDGIEIMELEVTSVESIRQCANTVAKRTGGTLDILVNNAGVNAIVPLLDASLDDAKKVYDANVWSVVAMAQAFAPMLIKAKGTMCNISSVSGEMVFAWAGVYSSSRSAGTRISETLRLELAPLGVRVVTVILGGVQTSGNDPSNIADLELPSSSYYQKITAVIDLHKKTMVHPNKQNVDVAAENVVNDLLNGRGIFIRRGQASTLSWLFNTFLPYRLFTYLINRESALDKIGFRGDTE</sequence>
<comment type="function">
    <text evidence="6 7 11">Short-chain dehydrogenase; part of the gene cluster that mediates the biosynthesis of the mycotoxin cyclochlorotine, a hepatotoxic and carcinogenic cyclic chlorinated pentapeptide (PubMed:26954535, PubMed:33736433). The function of cctT within the pathway, if any, remains undetermined (PubMed:33736433). The NRPS cctN initially catalyzes the condensation of L-serine (Ser), Pro, L-2-aminobutyrate (2Abu), Ser, and beta-Phe in this order to produce isocyclotine. After the dichlorination of Pro2 catalyzed by cctP2 to produce isocyclochlorotine, the cctO-mediated transacylation of isocyclochlorotine can furnish cyclochlorotine. The subsequent hydroxylation of cyclochlorotine by cctR yields hydroxycyclochlorotine as the final product. CctP1 probably acts as a phenylalanine aminomutase and provides the uncommon building block beta-Phe. Furthermore, 2Abu can be synthesized from threonine by one of the threonine dehydratases and transaminases localized outside of the cluster. The functions of the remaining proteins encoded by the cluster, cctM and cctT, have not been identified yet (Probable) (PubMed:33736433).</text>
</comment>
<comment type="similarity">
    <text evidence="9">Belongs to the short-chain dehydrogenases/reductases (SDR) family.</text>
</comment>
<accession>A0A0U1LQE2</accession>
<reference key="1">
    <citation type="journal article" date="2015" name="J. Biotechnol.">
        <title>Draft genome sequence of Talaromyces islandicus ('Penicillium islandicum') WF-38-12, a neglected mold with significant biotechnological potential.</title>
        <authorList>
            <person name="Schafhauser T."/>
            <person name="Wibberg D."/>
            <person name="Rueckert C."/>
            <person name="Winkler A."/>
            <person name="Flor L."/>
            <person name="van Pee K.-H."/>
            <person name="Fewer D.P."/>
            <person name="Sivonen K."/>
            <person name="Jahn L."/>
            <person name="Ludwig-Mueller J."/>
            <person name="Caradec T."/>
            <person name="Jacques P."/>
            <person name="Huijbers M.M.E."/>
            <person name="van Berkel W.J.H."/>
            <person name="Weber T."/>
            <person name="Wohlleben W."/>
            <person name="Kalinowski J."/>
        </authorList>
    </citation>
    <scope>NUCLEOTIDE SEQUENCE [LARGE SCALE GENOMIC DNA]</scope>
    <source>
        <strain>ATCC 26535 / WF-38-12</strain>
    </source>
</reference>
<reference key="2">
    <citation type="journal article" date="2016" name="Environ. Microbiol.">
        <title>The cyclochlorotine mycotoxin is produced by the nonribosomal peptide synthetase CctN in Talaromyces islandicus ('Penicillium islandicum').</title>
        <authorList>
            <person name="Schafhauser T."/>
            <person name="Kirchner N."/>
            <person name="Kulik A."/>
            <person name="Huijbers M.M."/>
            <person name="Flor L."/>
            <person name="Caradec T."/>
            <person name="Fewer D.P."/>
            <person name="Gross H."/>
            <person name="Jacques P."/>
            <person name="Jahn L."/>
            <person name="Jokela J."/>
            <person name="Leclere V."/>
            <person name="Ludwig-Mueller J."/>
            <person name="Sivonen K."/>
            <person name="van Berkel W.J."/>
            <person name="Weber T."/>
            <person name="Wohlleben W."/>
            <person name="van Pee K.H."/>
        </authorList>
    </citation>
    <scope>FUNCTION</scope>
</reference>
<reference key="3">
    <citation type="journal article" date="2021" name="Org. Lett.">
        <title>Biosynthesis of cyclochlorotine: identification of the genes involved in oxidative transformations and intramolecular O,N-transacylation.</title>
        <authorList>
            <person name="Jiang Y."/>
            <person name="Ozaki T."/>
            <person name="Liu C."/>
            <person name="Igarashi Y."/>
            <person name="Ye Y."/>
            <person name="Tang S."/>
            <person name="Ye T."/>
            <person name="Maruyama J.I."/>
            <person name="Minami A."/>
            <person name="Oikawa H."/>
        </authorList>
    </citation>
    <scope>FUNCTION</scope>
</reference>